<evidence type="ECO:0000255" key="1">
    <source>
        <dbReference type="HAMAP-Rule" id="MF_01274"/>
    </source>
</evidence>
<feature type="chain" id="PRO_1000054358" description="Type III pantothenate kinase">
    <location>
        <begin position="1"/>
        <end position="258"/>
    </location>
</feature>
<feature type="active site" description="Proton acceptor" evidence="1">
    <location>
        <position position="109"/>
    </location>
</feature>
<feature type="binding site" evidence="1">
    <location>
        <begin position="6"/>
        <end position="13"/>
    </location>
    <ligand>
        <name>ATP</name>
        <dbReference type="ChEBI" id="CHEBI:30616"/>
    </ligand>
</feature>
<feature type="binding site" evidence="1">
    <location>
        <position position="100"/>
    </location>
    <ligand>
        <name>substrate</name>
    </ligand>
</feature>
<feature type="binding site" evidence="1">
    <location>
        <begin position="107"/>
        <end position="110"/>
    </location>
    <ligand>
        <name>substrate</name>
    </ligand>
</feature>
<feature type="binding site" evidence="1">
    <location>
        <position position="129"/>
    </location>
    <ligand>
        <name>K(+)</name>
        <dbReference type="ChEBI" id="CHEBI:29103"/>
    </ligand>
</feature>
<feature type="binding site" evidence="1">
    <location>
        <position position="132"/>
    </location>
    <ligand>
        <name>ATP</name>
        <dbReference type="ChEBI" id="CHEBI:30616"/>
    </ligand>
</feature>
<feature type="binding site" evidence="1">
    <location>
        <position position="184"/>
    </location>
    <ligand>
        <name>substrate</name>
    </ligand>
</feature>
<dbReference type="EC" id="2.7.1.33" evidence="1"/>
<dbReference type="EMBL" id="CP000560">
    <property type="protein sequence ID" value="ABS72519.1"/>
    <property type="molecule type" value="Genomic_DNA"/>
</dbReference>
<dbReference type="RefSeq" id="WP_011996181.1">
    <property type="nucleotide sequence ID" value="NC_009725.2"/>
</dbReference>
<dbReference type="SMR" id="A7Z0J3"/>
<dbReference type="GeneID" id="93079219"/>
<dbReference type="KEGG" id="bay:RBAM_000810"/>
<dbReference type="HOGENOM" id="CLU_066627_1_0_9"/>
<dbReference type="UniPathway" id="UPA00241">
    <property type="reaction ID" value="UER00352"/>
</dbReference>
<dbReference type="Proteomes" id="UP000001120">
    <property type="component" value="Chromosome"/>
</dbReference>
<dbReference type="GO" id="GO:0005737">
    <property type="term" value="C:cytoplasm"/>
    <property type="evidence" value="ECO:0007669"/>
    <property type="project" value="UniProtKB-SubCell"/>
</dbReference>
<dbReference type="GO" id="GO:0005524">
    <property type="term" value="F:ATP binding"/>
    <property type="evidence" value="ECO:0007669"/>
    <property type="project" value="UniProtKB-UniRule"/>
</dbReference>
<dbReference type="GO" id="GO:0046872">
    <property type="term" value="F:metal ion binding"/>
    <property type="evidence" value="ECO:0007669"/>
    <property type="project" value="UniProtKB-KW"/>
</dbReference>
<dbReference type="GO" id="GO:0004594">
    <property type="term" value="F:pantothenate kinase activity"/>
    <property type="evidence" value="ECO:0007669"/>
    <property type="project" value="UniProtKB-UniRule"/>
</dbReference>
<dbReference type="GO" id="GO:0015937">
    <property type="term" value="P:coenzyme A biosynthetic process"/>
    <property type="evidence" value="ECO:0007669"/>
    <property type="project" value="UniProtKB-UniRule"/>
</dbReference>
<dbReference type="CDD" id="cd24015">
    <property type="entry name" value="ASKHA_NBD_PanK-III"/>
    <property type="match status" value="1"/>
</dbReference>
<dbReference type="Gene3D" id="3.30.420.40">
    <property type="match status" value="2"/>
</dbReference>
<dbReference type="HAMAP" id="MF_01274">
    <property type="entry name" value="Pantothen_kinase_3"/>
    <property type="match status" value="1"/>
</dbReference>
<dbReference type="InterPro" id="IPR043129">
    <property type="entry name" value="ATPase_NBD"/>
</dbReference>
<dbReference type="InterPro" id="IPR004619">
    <property type="entry name" value="Type_III_PanK"/>
</dbReference>
<dbReference type="NCBIfam" id="TIGR00671">
    <property type="entry name" value="baf"/>
    <property type="match status" value="1"/>
</dbReference>
<dbReference type="NCBIfam" id="NF009843">
    <property type="entry name" value="PRK13318.1-1"/>
    <property type="match status" value="1"/>
</dbReference>
<dbReference type="NCBIfam" id="NF009847">
    <property type="entry name" value="PRK13318.1-5"/>
    <property type="match status" value="1"/>
</dbReference>
<dbReference type="NCBIfam" id="NF009848">
    <property type="entry name" value="PRK13318.1-6"/>
    <property type="match status" value="1"/>
</dbReference>
<dbReference type="NCBIfam" id="NF009855">
    <property type="entry name" value="PRK13321.1"/>
    <property type="match status" value="1"/>
</dbReference>
<dbReference type="PANTHER" id="PTHR34265">
    <property type="entry name" value="TYPE III PANTOTHENATE KINASE"/>
    <property type="match status" value="1"/>
</dbReference>
<dbReference type="PANTHER" id="PTHR34265:SF1">
    <property type="entry name" value="TYPE III PANTOTHENATE KINASE"/>
    <property type="match status" value="1"/>
</dbReference>
<dbReference type="Pfam" id="PF03309">
    <property type="entry name" value="Pan_kinase"/>
    <property type="match status" value="1"/>
</dbReference>
<dbReference type="SUPFAM" id="SSF53067">
    <property type="entry name" value="Actin-like ATPase domain"/>
    <property type="match status" value="2"/>
</dbReference>
<reference key="1">
    <citation type="journal article" date="2007" name="Nat. Biotechnol.">
        <title>Comparative analysis of the complete genome sequence of the plant growth-promoting bacterium Bacillus amyloliquefaciens FZB42.</title>
        <authorList>
            <person name="Chen X.H."/>
            <person name="Koumoutsi A."/>
            <person name="Scholz R."/>
            <person name="Eisenreich A."/>
            <person name="Schneider K."/>
            <person name="Heinemeyer I."/>
            <person name="Morgenstern B."/>
            <person name="Voss B."/>
            <person name="Hess W.R."/>
            <person name="Reva O."/>
            <person name="Junge H."/>
            <person name="Voigt B."/>
            <person name="Jungblut P.R."/>
            <person name="Vater J."/>
            <person name="Suessmuth R."/>
            <person name="Liesegang H."/>
            <person name="Strittmatter A."/>
            <person name="Gottschalk G."/>
            <person name="Borriss R."/>
        </authorList>
    </citation>
    <scope>NUCLEOTIDE SEQUENCE [LARGE SCALE GENOMIC DNA]</scope>
    <source>
        <strain>DSM 23117 / BGSC 10A6 / LMG 26770 / FZB42</strain>
    </source>
</reference>
<gene>
    <name evidence="1" type="primary">coaX</name>
    <name type="ordered locus">RBAM_000810</name>
</gene>
<comment type="function">
    <text evidence="1">Catalyzes the phosphorylation of pantothenate (Pan), the first step in CoA biosynthesis.</text>
</comment>
<comment type="catalytic activity">
    <reaction evidence="1">
        <text>(R)-pantothenate + ATP = (R)-4'-phosphopantothenate + ADP + H(+)</text>
        <dbReference type="Rhea" id="RHEA:16373"/>
        <dbReference type="ChEBI" id="CHEBI:10986"/>
        <dbReference type="ChEBI" id="CHEBI:15378"/>
        <dbReference type="ChEBI" id="CHEBI:29032"/>
        <dbReference type="ChEBI" id="CHEBI:30616"/>
        <dbReference type="ChEBI" id="CHEBI:456216"/>
        <dbReference type="EC" id="2.7.1.33"/>
    </reaction>
</comment>
<comment type="cofactor">
    <cofactor evidence="1">
        <name>NH4(+)</name>
        <dbReference type="ChEBI" id="CHEBI:28938"/>
    </cofactor>
    <cofactor evidence="1">
        <name>K(+)</name>
        <dbReference type="ChEBI" id="CHEBI:29103"/>
    </cofactor>
    <text evidence="1">A monovalent cation. Ammonium or potassium.</text>
</comment>
<comment type="pathway">
    <text evidence="1">Cofactor biosynthesis; coenzyme A biosynthesis; CoA from (R)-pantothenate: step 1/5.</text>
</comment>
<comment type="subunit">
    <text evidence="1">Homodimer.</text>
</comment>
<comment type="subcellular location">
    <subcellularLocation>
        <location evidence="1">Cytoplasm</location>
    </subcellularLocation>
</comment>
<comment type="similarity">
    <text evidence="1">Belongs to the type III pantothenate kinase family.</text>
</comment>
<sequence length="258" mass="28553">MLLVIDVGNTNTVIGVYHDGELEYHWRIETSRHKTEDEFGMLLRSLFEHSGLMFEQIEGIIISSVVPPIMFSLERMCTKYFHIEPQVVGPGMKTGLNIKYDNPKEVGADRIVNAVAAIQQYGAPLIVVDFGTATTYCYIDENKQYMGGAIAPGITISTEALYSRAAKLPRIEIARPDNIIGKNTVSAMQSGILFGYVGQVEGIVKRMKWQATQEPKVIATGGLASLIANESDCIDIVDPFLTLKGLEIIYERNRVGHV</sequence>
<name>COAX_BACVZ</name>
<organism>
    <name type="scientific">Bacillus velezensis (strain DSM 23117 / BGSC 10A6 / LMG 26770 / FZB42)</name>
    <name type="common">Bacillus amyloliquefaciens subsp. plantarum</name>
    <dbReference type="NCBI Taxonomy" id="326423"/>
    <lineage>
        <taxon>Bacteria</taxon>
        <taxon>Bacillati</taxon>
        <taxon>Bacillota</taxon>
        <taxon>Bacilli</taxon>
        <taxon>Bacillales</taxon>
        <taxon>Bacillaceae</taxon>
        <taxon>Bacillus</taxon>
        <taxon>Bacillus amyloliquefaciens group</taxon>
    </lineage>
</organism>
<protein>
    <recommendedName>
        <fullName evidence="1">Type III pantothenate kinase</fullName>
        <ecNumber evidence="1">2.7.1.33</ecNumber>
    </recommendedName>
    <alternativeName>
        <fullName evidence="1">PanK-III</fullName>
    </alternativeName>
    <alternativeName>
        <fullName evidence="1">Pantothenic acid kinase</fullName>
    </alternativeName>
</protein>
<accession>A7Z0J3</accession>
<proteinExistence type="inferred from homology"/>
<keyword id="KW-0067">ATP-binding</keyword>
<keyword id="KW-0173">Coenzyme A biosynthesis</keyword>
<keyword id="KW-0963">Cytoplasm</keyword>
<keyword id="KW-0418">Kinase</keyword>
<keyword id="KW-0479">Metal-binding</keyword>
<keyword id="KW-0547">Nucleotide-binding</keyword>
<keyword id="KW-0630">Potassium</keyword>
<keyword id="KW-0808">Transferase</keyword>